<evidence type="ECO:0000255" key="1">
    <source>
        <dbReference type="HAMAP-Rule" id="MF_01667"/>
    </source>
</evidence>
<gene>
    <name evidence="1" type="primary">ghrB</name>
    <name type="ordered locus">ETA_34410</name>
</gene>
<sequence length="321" mass="35117">MKPSVVLYKSLPEDLRARLDEHCHVTEINGLTAENIAKHEDVFRQAEGILGSGGKVDAEFLRQAPKLRVASSISVGYDNFDVAALNDRGVLLMHTPTVLTETVADTMMALVLSSARRVVEMAERVKSGEWRGSISSDWFGIDVHHKKLGILGMGRIGLALAQRAHLGFGMPILYNARKHHDEAEQRFDAEYCDLDTLLAESDFLCISLPLTEQTHHLIGREQLAKMKRSAILINAGRGPVVDEQALIAALKDGTLHAAGLDVFEQEPLPVSSELLALRNVVALPHIGSATHETRYGMAKDAVDNLIAALNGKVEKNCVNPR</sequence>
<feature type="chain" id="PRO_1000187291" description="Glyoxylate/hydroxypyruvate reductase B">
    <location>
        <begin position="1"/>
        <end position="321"/>
    </location>
</feature>
<feature type="active site" evidence="1">
    <location>
        <position position="237"/>
    </location>
</feature>
<feature type="active site" evidence="1">
    <location>
        <position position="266"/>
    </location>
</feature>
<feature type="active site" description="Proton donor" evidence="1">
    <location>
        <position position="285"/>
    </location>
</feature>
<organism>
    <name type="scientific">Erwinia tasmaniensis (strain DSM 17950 / CFBP 7177 / CIP 109463 / NCPPB 4357 / Et1/99)</name>
    <dbReference type="NCBI Taxonomy" id="465817"/>
    <lineage>
        <taxon>Bacteria</taxon>
        <taxon>Pseudomonadati</taxon>
        <taxon>Pseudomonadota</taxon>
        <taxon>Gammaproteobacteria</taxon>
        <taxon>Enterobacterales</taxon>
        <taxon>Erwiniaceae</taxon>
        <taxon>Erwinia</taxon>
    </lineage>
</organism>
<name>GHRB_ERWT9</name>
<proteinExistence type="inferred from homology"/>
<dbReference type="EC" id="1.1.1.79" evidence="1"/>
<dbReference type="EC" id="1.1.1.81" evidence="1"/>
<dbReference type="EMBL" id="CU468135">
    <property type="protein sequence ID" value="CAO98487.1"/>
    <property type="molecule type" value="Genomic_DNA"/>
</dbReference>
<dbReference type="RefSeq" id="WP_012443110.1">
    <property type="nucleotide sequence ID" value="NC_010694.1"/>
</dbReference>
<dbReference type="SMR" id="B2VCD1"/>
<dbReference type="STRING" id="465817.ETA_34410"/>
<dbReference type="KEGG" id="eta:ETA_34410"/>
<dbReference type="eggNOG" id="COG1052">
    <property type="taxonomic scope" value="Bacteria"/>
</dbReference>
<dbReference type="HOGENOM" id="CLU_019796_1_2_6"/>
<dbReference type="OrthoDB" id="9805416at2"/>
<dbReference type="Proteomes" id="UP000001726">
    <property type="component" value="Chromosome"/>
</dbReference>
<dbReference type="GO" id="GO:0005829">
    <property type="term" value="C:cytosol"/>
    <property type="evidence" value="ECO:0007669"/>
    <property type="project" value="TreeGrafter"/>
</dbReference>
<dbReference type="GO" id="GO:0005886">
    <property type="term" value="C:plasma membrane"/>
    <property type="evidence" value="ECO:0007669"/>
    <property type="project" value="UniProtKB-UniRule"/>
</dbReference>
<dbReference type="GO" id="GO:0030267">
    <property type="term" value="F:glyoxylate reductase (NADPH) activity"/>
    <property type="evidence" value="ECO:0007669"/>
    <property type="project" value="UniProtKB-UniRule"/>
</dbReference>
<dbReference type="GO" id="GO:0008465">
    <property type="term" value="F:hydroxypyruvate reductase (NADH) activity"/>
    <property type="evidence" value="ECO:0007669"/>
    <property type="project" value="RHEA"/>
</dbReference>
<dbReference type="GO" id="GO:0120509">
    <property type="term" value="F:hydroxypyruvate reductase (NADPH) activity"/>
    <property type="evidence" value="ECO:0007669"/>
    <property type="project" value="RHEA"/>
</dbReference>
<dbReference type="GO" id="GO:0051287">
    <property type="term" value="F:NAD binding"/>
    <property type="evidence" value="ECO:0007669"/>
    <property type="project" value="InterPro"/>
</dbReference>
<dbReference type="CDD" id="cd05301">
    <property type="entry name" value="GDH"/>
    <property type="match status" value="1"/>
</dbReference>
<dbReference type="FunFam" id="3.40.50.720:FF:000026">
    <property type="entry name" value="Glyoxylate/hydroxypyruvate reductase B"/>
    <property type="match status" value="1"/>
</dbReference>
<dbReference type="Gene3D" id="3.40.50.720">
    <property type="entry name" value="NAD(P)-binding Rossmann-like Domain"/>
    <property type="match status" value="2"/>
</dbReference>
<dbReference type="HAMAP" id="MF_01667">
    <property type="entry name" value="2_Hacid_dh_C_GhrB"/>
    <property type="match status" value="1"/>
</dbReference>
<dbReference type="InterPro" id="IPR050223">
    <property type="entry name" value="D-isomer_2-hydroxyacid_DH"/>
</dbReference>
<dbReference type="InterPro" id="IPR006139">
    <property type="entry name" value="D-isomer_2_OHA_DH_cat_dom"/>
</dbReference>
<dbReference type="InterPro" id="IPR029753">
    <property type="entry name" value="D-isomer_DH_CS"/>
</dbReference>
<dbReference type="InterPro" id="IPR006140">
    <property type="entry name" value="D-isomer_DH_NAD-bd"/>
</dbReference>
<dbReference type="InterPro" id="IPR023756">
    <property type="entry name" value="Glyo/OHPyrv_Rdtase_B"/>
</dbReference>
<dbReference type="InterPro" id="IPR036291">
    <property type="entry name" value="NAD(P)-bd_dom_sf"/>
</dbReference>
<dbReference type="NCBIfam" id="NF011938">
    <property type="entry name" value="PRK15409.1"/>
    <property type="match status" value="1"/>
</dbReference>
<dbReference type="PANTHER" id="PTHR10996">
    <property type="entry name" value="2-HYDROXYACID DEHYDROGENASE-RELATED"/>
    <property type="match status" value="1"/>
</dbReference>
<dbReference type="PANTHER" id="PTHR10996:SF283">
    <property type="entry name" value="GLYOXYLATE_HYDROXYPYRUVATE REDUCTASE B"/>
    <property type="match status" value="1"/>
</dbReference>
<dbReference type="Pfam" id="PF00389">
    <property type="entry name" value="2-Hacid_dh"/>
    <property type="match status" value="1"/>
</dbReference>
<dbReference type="Pfam" id="PF02826">
    <property type="entry name" value="2-Hacid_dh_C"/>
    <property type="match status" value="1"/>
</dbReference>
<dbReference type="SUPFAM" id="SSF52283">
    <property type="entry name" value="Formate/glycerate dehydrogenase catalytic domain-like"/>
    <property type="match status" value="1"/>
</dbReference>
<dbReference type="SUPFAM" id="SSF51735">
    <property type="entry name" value="NAD(P)-binding Rossmann-fold domains"/>
    <property type="match status" value="1"/>
</dbReference>
<dbReference type="PROSITE" id="PS00671">
    <property type="entry name" value="D_2_HYDROXYACID_DH_3"/>
    <property type="match status" value="1"/>
</dbReference>
<reference key="1">
    <citation type="journal article" date="2008" name="Environ. Microbiol.">
        <title>The genome of Erwinia tasmaniensis strain Et1/99, a non-pathogenic bacterium in the genus Erwinia.</title>
        <authorList>
            <person name="Kube M."/>
            <person name="Migdoll A.M."/>
            <person name="Mueller I."/>
            <person name="Kuhl H."/>
            <person name="Beck A."/>
            <person name="Reinhardt R."/>
            <person name="Geider K."/>
        </authorList>
    </citation>
    <scope>NUCLEOTIDE SEQUENCE [LARGE SCALE GENOMIC DNA]</scope>
    <source>
        <strain>DSM 17950 / CFBP 7177 / CIP 109463 / NCPPB 4357 / Et1/99</strain>
    </source>
</reference>
<protein>
    <recommendedName>
        <fullName evidence="1">Glyoxylate/hydroxypyruvate reductase B</fullName>
        <ecNumber evidence="1">1.1.1.79</ecNumber>
        <ecNumber evidence="1">1.1.1.81</ecNumber>
    </recommendedName>
</protein>
<accession>B2VCD1</accession>
<comment type="function">
    <text evidence="1">Catalyzes the NADPH-dependent reduction of glyoxylate and hydroxypyruvate into glycolate and glycerate, respectively.</text>
</comment>
<comment type="catalytic activity">
    <reaction evidence="1">
        <text>glycolate + NADP(+) = glyoxylate + NADPH + H(+)</text>
        <dbReference type="Rhea" id="RHEA:10992"/>
        <dbReference type="ChEBI" id="CHEBI:15378"/>
        <dbReference type="ChEBI" id="CHEBI:29805"/>
        <dbReference type="ChEBI" id="CHEBI:36655"/>
        <dbReference type="ChEBI" id="CHEBI:57783"/>
        <dbReference type="ChEBI" id="CHEBI:58349"/>
        <dbReference type="EC" id="1.1.1.79"/>
    </reaction>
</comment>
<comment type="catalytic activity">
    <reaction evidence="1">
        <text>(R)-glycerate + NAD(+) = 3-hydroxypyruvate + NADH + H(+)</text>
        <dbReference type="Rhea" id="RHEA:17905"/>
        <dbReference type="ChEBI" id="CHEBI:15378"/>
        <dbReference type="ChEBI" id="CHEBI:16659"/>
        <dbReference type="ChEBI" id="CHEBI:17180"/>
        <dbReference type="ChEBI" id="CHEBI:57540"/>
        <dbReference type="ChEBI" id="CHEBI:57945"/>
        <dbReference type="EC" id="1.1.1.81"/>
    </reaction>
</comment>
<comment type="catalytic activity">
    <reaction evidence="1">
        <text>(R)-glycerate + NADP(+) = 3-hydroxypyruvate + NADPH + H(+)</text>
        <dbReference type="Rhea" id="RHEA:18657"/>
        <dbReference type="ChEBI" id="CHEBI:15378"/>
        <dbReference type="ChEBI" id="CHEBI:16659"/>
        <dbReference type="ChEBI" id="CHEBI:17180"/>
        <dbReference type="ChEBI" id="CHEBI:57783"/>
        <dbReference type="ChEBI" id="CHEBI:58349"/>
        <dbReference type="EC" id="1.1.1.81"/>
    </reaction>
</comment>
<comment type="subunit">
    <text evidence="1">Homodimer.</text>
</comment>
<comment type="subcellular location">
    <subcellularLocation>
        <location evidence="1">Cytoplasm</location>
    </subcellularLocation>
</comment>
<comment type="similarity">
    <text evidence="1">Belongs to the D-isomer specific 2-hydroxyacid dehydrogenase family. GhrB subfamily.</text>
</comment>
<keyword id="KW-0963">Cytoplasm</keyword>
<keyword id="KW-0520">NAD</keyword>
<keyword id="KW-0521">NADP</keyword>
<keyword id="KW-0560">Oxidoreductase</keyword>
<keyword id="KW-1185">Reference proteome</keyword>